<keyword id="KW-0066">ATP synthesis</keyword>
<keyword id="KW-0997">Cell inner membrane</keyword>
<keyword id="KW-1003">Cell membrane</keyword>
<keyword id="KW-0139">CF(1)</keyword>
<keyword id="KW-0375">Hydrogen ion transport</keyword>
<keyword id="KW-0406">Ion transport</keyword>
<keyword id="KW-0472">Membrane</keyword>
<keyword id="KW-0813">Transport</keyword>
<feature type="chain" id="PRO_1000184748" description="ATP synthase subunit delta">
    <location>
        <begin position="1"/>
        <end position="178"/>
    </location>
</feature>
<sequence length="178" mass="19621">MAELTTLARPYAKAVFDAAQDQNAVDQWDQALAFAAQVAADQEVKNILANPGLSEQRKAELFAECFEEPLPEALRNFLLILAENKRLALLPEISALFRLYRADLEKSVHLTIDTAFDLSADEQQKLIDALSKKLERKVELETTVDQSLIGGVIVRTGDLVIDASVRGKLARMARALGS</sequence>
<gene>
    <name evidence="1" type="primary">atpH</name>
    <name type="ordered locus">Maqu_3878</name>
</gene>
<protein>
    <recommendedName>
        <fullName evidence="1">ATP synthase subunit delta</fullName>
    </recommendedName>
    <alternativeName>
        <fullName evidence="1">ATP synthase F(1) sector subunit delta</fullName>
    </alternativeName>
    <alternativeName>
        <fullName evidence="1">F-type ATPase subunit delta</fullName>
        <shortName evidence="1">F-ATPase subunit delta</shortName>
    </alternativeName>
</protein>
<evidence type="ECO:0000255" key="1">
    <source>
        <dbReference type="HAMAP-Rule" id="MF_01416"/>
    </source>
</evidence>
<comment type="function">
    <text evidence="1">F(1)F(0) ATP synthase produces ATP from ADP in the presence of a proton or sodium gradient. F-type ATPases consist of two structural domains, F(1) containing the extramembraneous catalytic core and F(0) containing the membrane proton channel, linked together by a central stalk and a peripheral stalk. During catalysis, ATP synthesis in the catalytic domain of F(1) is coupled via a rotary mechanism of the central stalk subunits to proton translocation.</text>
</comment>
<comment type="function">
    <text evidence="1">This protein is part of the stalk that links CF(0) to CF(1). It either transmits conformational changes from CF(0) to CF(1) or is implicated in proton conduction.</text>
</comment>
<comment type="subunit">
    <text evidence="1">F-type ATPases have 2 components, F(1) - the catalytic core - and F(0) - the membrane proton channel. F(1) has five subunits: alpha(3), beta(3), gamma(1), delta(1), epsilon(1). F(0) has three main subunits: a(1), b(2) and c(10-14). The alpha and beta chains form an alternating ring which encloses part of the gamma chain. F(1) is attached to F(0) by a central stalk formed by the gamma and epsilon chains, while a peripheral stalk is formed by the delta and b chains.</text>
</comment>
<comment type="subcellular location">
    <subcellularLocation>
        <location evidence="1">Cell inner membrane</location>
        <topology evidence="1">Peripheral membrane protein</topology>
    </subcellularLocation>
</comment>
<comment type="similarity">
    <text evidence="1">Belongs to the ATPase delta chain family.</text>
</comment>
<name>ATPD_MARN8</name>
<dbReference type="EMBL" id="CP000514">
    <property type="protein sequence ID" value="ABM20946.1"/>
    <property type="molecule type" value="Genomic_DNA"/>
</dbReference>
<dbReference type="RefSeq" id="WP_011787279.1">
    <property type="nucleotide sequence ID" value="NC_008740.1"/>
</dbReference>
<dbReference type="SMR" id="A1U7H7"/>
<dbReference type="STRING" id="351348.Maqu_3878"/>
<dbReference type="KEGG" id="maq:Maqu_3878"/>
<dbReference type="eggNOG" id="COG0712">
    <property type="taxonomic scope" value="Bacteria"/>
</dbReference>
<dbReference type="HOGENOM" id="CLU_085114_3_0_6"/>
<dbReference type="OrthoDB" id="9816221at2"/>
<dbReference type="Proteomes" id="UP000000998">
    <property type="component" value="Chromosome"/>
</dbReference>
<dbReference type="GO" id="GO:0005886">
    <property type="term" value="C:plasma membrane"/>
    <property type="evidence" value="ECO:0007669"/>
    <property type="project" value="UniProtKB-SubCell"/>
</dbReference>
<dbReference type="GO" id="GO:0045259">
    <property type="term" value="C:proton-transporting ATP synthase complex"/>
    <property type="evidence" value="ECO:0007669"/>
    <property type="project" value="UniProtKB-KW"/>
</dbReference>
<dbReference type="GO" id="GO:0046933">
    <property type="term" value="F:proton-transporting ATP synthase activity, rotational mechanism"/>
    <property type="evidence" value="ECO:0007669"/>
    <property type="project" value="UniProtKB-UniRule"/>
</dbReference>
<dbReference type="Gene3D" id="1.10.520.20">
    <property type="entry name" value="N-terminal domain of the delta subunit of the F1F0-ATP synthase"/>
    <property type="match status" value="1"/>
</dbReference>
<dbReference type="HAMAP" id="MF_01416">
    <property type="entry name" value="ATP_synth_delta_bact"/>
    <property type="match status" value="1"/>
</dbReference>
<dbReference type="InterPro" id="IPR026015">
    <property type="entry name" value="ATP_synth_OSCP/delta_N_sf"/>
</dbReference>
<dbReference type="InterPro" id="IPR020781">
    <property type="entry name" value="ATPase_OSCP/d_CS"/>
</dbReference>
<dbReference type="InterPro" id="IPR000711">
    <property type="entry name" value="ATPase_OSCP/dsu"/>
</dbReference>
<dbReference type="NCBIfam" id="TIGR01145">
    <property type="entry name" value="ATP_synt_delta"/>
    <property type="match status" value="1"/>
</dbReference>
<dbReference type="NCBIfam" id="NF004402">
    <property type="entry name" value="PRK05758.2-2"/>
    <property type="match status" value="1"/>
</dbReference>
<dbReference type="PANTHER" id="PTHR11910">
    <property type="entry name" value="ATP SYNTHASE DELTA CHAIN"/>
    <property type="match status" value="1"/>
</dbReference>
<dbReference type="Pfam" id="PF00213">
    <property type="entry name" value="OSCP"/>
    <property type="match status" value="1"/>
</dbReference>
<dbReference type="PRINTS" id="PR00125">
    <property type="entry name" value="ATPASEDELTA"/>
</dbReference>
<dbReference type="SUPFAM" id="SSF47928">
    <property type="entry name" value="N-terminal domain of the delta subunit of the F1F0-ATP synthase"/>
    <property type="match status" value="1"/>
</dbReference>
<dbReference type="PROSITE" id="PS00389">
    <property type="entry name" value="ATPASE_DELTA"/>
    <property type="match status" value="1"/>
</dbReference>
<accession>A1U7H7</accession>
<proteinExistence type="inferred from homology"/>
<reference key="1">
    <citation type="journal article" date="2011" name="Appl. Environ. Microbiol.">
        <title>Genomic potential of Marinobacter aquaeolei, a biogeochemical 'opportunitroph'.</title>
        <authorList>
            <person name="Singer E."/>
            <person name="Webb E.A."/>
            <person name="Nelson W.C."/>
            <person name="Heidelberg J.F."/>
            <person name="Ivanova N."/>
            <person name="Pati A."/>
            <person name="Edwards K.J."/>
        </authorList>
    </citation>
    <scope>NUCLEOTIDE SEQUENCE [LARGE SCALE GENOMIC DNA]</scope>
    <source>
        <strain>ATCC 700491 / DSM 11845 / VT8</strain>
    </source>
</reference>
<organism>
    <name type="scientific">Marinobacter nauticus (strain ATCC 700491 / DSM 11845 / VT8)</name>
    <name type="common">Marinobacter aquaeolei</name>
    <dbReference type="NCBI Taxonomy" id="351348"/>
    <lineage>
        <taxon>Bacteria</taxon>
        <taxon>Pseudomonadati</taxon>
        <taxon>Pseudomonadota</taxon>
        <taxon>Gammaproteobacteria</taxon>
        <taxon>Pseudomonadales</taxon>
        <taxon>Marinobacteraceae</taxon>
        <taxon>Marinobacter</taxon>
    </lineage>
</organism>